<gene>
    <name evidence="1" type="primary">ycgL</name>
    <name type="ordered locus">EcHS_A1279</name>
</gene>
<proteinExistence type="inferred from homology"/>
<organism>
    <name type="scientific">Escherichia coli O9:H4 (strain HS)</name>
    <dbReference type="NCBI Taxonomy" id="331112"/>
    <lineage>
        <taxon>Bacteria</taxon>
        <taxon>Pseudomonadati</taxon>
        <taxon>Pseudomonadota</taxon>
        <taxon>Gammaproteobacteria</taxon>
        <taxon>Enterobacterales</taxon>
        <taxon>Enterobacteriaceae</taxon>
        <taxon>Escherichia</taxon>
    </lineage>
</organism>
<sequence length="108" mass="12400">MPKPGILKSKSMFCVIYRSSKRDQTYLYVEKKDDFSRVPEELMKGFGQPQLAMILPLDGRKKLVNADIEKVKLALTEQGYYLQLPPPPEDLLKQHLSVMGQKTDDTNK</sequence>
<accession>A7ZZB3</accession>
<protein>
    <recommendedName>
        <fullName evidence="1">Protein YcgL</fullName>
    </recommendedName>
</protein>
<reference key="1">
    <citation type="journal article" date="2008" name="J. Bacteriol.">
        <title>The pangenome structure of Escherichia coli: comparative genomic analysis of E. coli commensal and pathogenic isolates.</title>
        <authorList>
            <person name="Rasko D.A."/>
            <person name="Rosovitz M.J."/>
            <person name="Myers G.S.A."/>
            <person name="Mongodin E.F."/>
            <person name="Fricke W.F."/>
            <person name="Gajer P."/>
            <person name="Crabtree J."/>
            <person name="Sebaihia M."/>
            <person name="Thomson N.R."/>
            <person name="Chaudhuri R."/>
            <person name="Henderson I.R."/>
            <person name="Sperandio V."/>
            <person name="Ravel J."/>
        </authorList>
    </citation>
    <scope>NUCLEOTIDE SEQUENCE [LARGE SCALE GENOMIC DNA]</scope>
    <source>
        <strain>HS</strain>
    </source>
</reference>
<dbReference type="EMBL" id="CP000802">
    <property type="protein sequence ID" value="ABV05617.1"/>
    <property type="status" value="ALT_INIT"/>
    <property type="molecule type" value="Genomic_DNA"/>
</dbReference>
<dbReference type="BMRB" id="A7ZZB3"/>
<dbReference type="SMR" id="A7ZZB3"/>
<dbReference type="KEGG" id="ecx:EcHS_A1279"/>
<dbReference type="HOGENOM" id="CLU_155118_1_0_6"/>
<dbReference type="Gene3D" id="3.10.510.20">
    <property type="entry name" value="YcgL domain"/>
    <property type="match status" value="1"/>
</dbReference>
<dbReference type="HAMAP" id="MF_01866">
    <property type="entry name" value="UPF0745"/>
    <property type="match status" value="1"/>
</dbReference>
<dbReference type="InterPro" id="IPR038068">
    <property type="entry name" value="YcgL-like_sf"/>
</dbReference>
<dbReference type="InterPro" id="IPR027354">
    <property type="entry name" value="YcgL_dom"/>
</dbReference>
<dbReference type="PANTHER" id="PTHR38109">
    <property type="entry name" value="PROTEIN YCGL"/>
    <property type="match status" value="1"/>
</dbReference>
<dbReference type="PANTHER" id="PTHR38109:SF1">
    <property type="entry name" value="PROTEIN YCGL"/>
    <property type="match status" value="1"/>
</dbReference>
<dbReference type="Pfam" id="PF05166">
    <property type="entry name" value="YcgL"/>
    <property type="match status" value="1"/>
</dbReference>
<dbReference type="SUPFAM" id="SSF160191">
    <property type="entry name" value="YcgL-like"/>
    <property type="match status" value="1"/>
</dbReference>
<dbReference type="PROSITE" id="PS51648">
    <property type="entry name" value="YCGL"/>
    <property type="match status" value="1"/>
</dbReference>
<evidence type="ECO:0000255" key="1">
    <source>
        <dbReference type="HAMAP-Rule" id="MF_01866"/>
    </source>
</evidence>
<evidence type="ECO:0000305" key="2"/>
<feature type="chain" id="PRO_0000375305" description="Protein YcgL">
    <location>
        <begin position="1"/>
        <end position="108"/>
    </location>
</feature>
<feature type="domain" description="YcgL" evidence="1">
    <location>
        <begin position="12"/>
        <end position="96"/>
    </location>
</feature>
<name>YCGL_ECOHS</name>
<comment type="sequence caution" evidence="2">
    <conflict type="erroneous initiation">
        <sequence resource="EMBL-CDS" id="ABV05617"/>
    </conflict>
</comment>